<organism>
    <name type="scientific">Picrophilus torridus (strain ATCC 700027 / DSM 9790 / JCM 10055 / NBRC 100828 / KAW 2/3)</name>
    <dbReference type="NCBI Taxonomy" id="1122961"/>
    <lineage>
        <taxon>Archaea</taxon>
        <taxon>Methanobacteriati</taxon>
        <taxon>Thermoplasmatota</taxon>
        <taxon>Thermoplasmata</taxon>
        <taxon>Thermoplasmatales</taxon>
        <taxon>Picrophilaceae</taxon>
        <taxon>Picrophilus</taxon>
    </lineage>
</organism>
<gene>
    <name evidence="1" type="primary">uppS</name>
    <name type="ordered locus">PTO1378</name>
</gene>
<name>UPPS_PICTO</name>
<feature type="chain" id="PRO_0000123735" description="Tritrans,polycis-undecaprenyl-diphosphate synthase (geranylgeranyl-diphosphate specific)">
    <location>
        <begin position="1"/>
        <end position="255"/>
    </location>
</feature>
<feature type="active site" evidence="1">
    <location>
        <position position="34"/>
    </location>
</feature>
<feature type="active site" description="Proton acceptor" evidence="1">
    <location>
        <position position="82"/>
    </location>
</feature>
<feature type="binding site" evidence="1">
    <location>
        <position position="34"/>
    </location>
    <ligand>
        <name>Mg(2+)</name>
        <dbReference type="ChEBI" id="CHEBI:18420"/>
    </ligand>
</feature>
<feature type="binding site" evidence="1">
    <location>
        <begin position="35"/>
        <end position="38"/>
    </location>
    <ligand>
        <name>substrate</name>
    </ligand>
</feature>
<feature type="binding site" evidence="1">
    <location>
        <position position="51"/>
    </location>
    <ligand>
        <name>substrate</name>
    </ligand>
</feature>
<feature type="binding site" evidence="1">
    <location>
        <begin position="79"/>
        <end position="81"/>
    </location>
    <ligand>
        <name>substrate</name>
    </ligand>
</feature>
<feature type="binding site" evidence="1">
    <location>
        <position position="83"/>
    </location>
    <ligand>
        <name>substrate</name>
    </ligand>
</feature>
<feature type="binding site" evidence="1">
    <location>
        <position position="85"/>
    </location>
    <ligand>
        <name>substrate</name>
    </ligand>
</feature>
<feature type="binding site" evidence="1">
    <location>
        <position position="204"/>
    </location>
    <ligand>
        <name>substrate</name>
    </ligand>
</feature>
<feature type="binding site" evidence="1">
    <location>
        <begin position="210"/>
        <end position="212"/>
    </location>
    <ligand>
        <name>substrate</name>
    </ligand>
</feature>
<feature type="binding site" evidence="1">
    <location>
        <position position="223"/>
    </location>
    <ligand>
        <name>Mg(2+)</name>
        <dbReference type="ChEBI" id="CHEBI:18420"/>
    </ligand>
</feature>
<dbReference type="EC" id="2.5.1.89" evidence="1"/>
<dbReference type="EMBL" id="AE017261">
    <property type="protein sequence ID" value="AAT43963.1"/>
    <property type="molecule type" value="Genomic_DNA"/>
</dbReference>
<dbReference type="RefSeq" id="WP_011178179.1">
    <property type="nucleotide sequence ID" value="NC_005877.1"/>
</dbReference>
<dbReference type="SMR" id="Q6KZ89"/>
<dbReference type="FunCoup" id="Q6KZ89">
    <property type="interactions" value="120"/>
</dbReference>
<dbReference type="STRING" id="263820.PTO1378"/>
<dbReference type="PaxDb" id="263820-PTO1378"/>
<dbReference type="GeneID" id="2845319"/>
<dbReference type="KEGG" id="pto:PTO1378"/>
<dbReference type="PATRIC" id="fig|263820.9.peg.1432"/>
<dbReference type="eggNOG" id="arCOG01532">
    <property type="taxonomic scope" value="Archaea"/>
</dbReference>
<dbReference type="HOGENOM" id="CLU_038505_2_0_2"/>
<dbReference type="InParanoid" id="Q6KZ89"/>
<dbReference type="OrthoDB" id="8293at2157"/>
<dbReference type="Proteomes" id="UP000000438">
    <property type="component" value="Chromosome"/>
</dbReference>
<dbReference type="GO" id="GO:0045547">
    <property type="term" value="F:ditrans,polycis-polyprenyl diphosphate synthase [(2E,6E)-farnesyl diphosphate specific] activity"/>
    <property type="evidence" value="ECO:0007669"/>
    <property type="project" value="TreeGrafter"/>
</dbReference>
<dbReference type="GO" id="GO:0000287">
    <property type="term" value="F:magnesium ion binding"/>
    <property type="evidence" value="ECO:0007669"/>
    <property type="project" value="UniProtKB-UniRule"/>
</dbReference>
<dbReference type="GO" id="GO:0016094">
    <property type="term" value="P:polyprenol biosynthetic process"/>
    <property type="evidence" value="ECO:0007669"/>
    <property type="project" value="TreeGrafter"/>
</dbReference>
<dbReference type="CDD" id="cd00475">
    <property type="entry name" value="Cis_IPPS"/>
    <property type="match status" value="1"/>
</dbReference>
<dbReference type="FunFam" id="3.40.1180.10:FF:000003">
    <property type="entry name" value="Isoprenyl transferase 2"/>
    <property type="match status" value="1"/>
</dbReference>
<dbReference type="Gene3D" id="3.40.1180.10">
    <property type="entry name" value="Decaprenyl diphosphate synthase-like"/>
    <property type="match status" value="1"/>
</dbReference>
<dbReference type="HAMAP" id="MF_01139">
    <property type="entry name" value="ISPT"/>
    <property type="match status" value="1"/>
</dbReference>
<dbReference type="InterPro" id="IPR001441">
    <property type="entry name" value="UPP_synth-like"/>
</dbReference>
<dbReference type="InterPro" id="IPR018520">
    <property type="entry name" value="UPP_synth-like_CS"/>
</dbReference>
<dbReference type="InterPro" id="IPR036424">
    <property type="entry name" value="UPP_synth-like_sf"/>
</dbReference>
<dbReference type="NCBIfam" id="TIGR00055">
    <property type="entry name" value="uppS"/>
    <property type="match status" value="1"/>
</dbReference>
<dbReference type="PANTHER" id="PTHR10291:SF43">
    <property type="entry name" value="DEHYDRODOLICHYL DIPHOSPHATE SYNTHASE COMPLEX SUBUNIT DHDDS"/>
    <property type="match status" value="1"/>
</dbReference>
<dbReference type="PANTHER" id="PTHR10291">
    <property type="entry name" value="DEHYDRODOLICHYL DIPHOSPHATE SYNTHASE FAMILY MEMBER"/>
    <property type="match status" value="1"/>
</dbReference>
<dbReference type="Pfam" id="PF01255">
    <property type="entry name" value="Prenyltransf"/>
    <property type="match status" value="1"/>
</dbReference>
<dbReference type="SUPFAM" id="SSF64005">
    <property type="entry name" value="Undecaprenyl diphosphate synthase"/>
    <property type="match status" value="1"/>
</dbReference>
<dbReference type="PROSITE" id="PS01066">
    <property type="entry name" value="UPP_SYNTHASE"/>
    <property type="match status" value="1"/>
</dbReference>
<evidence type="ECO:0000255" key="1">
    <source>
        <dbReference type="HAMAP-Rule" id="MF_01139"/>
    </source>
</evidence>
<accession>Q6KZ89</accession>
<keyword id="KW-0460">Magnesium</keyword>
<keyword id="KW-0479">Metal-binding</keyword>
<keyword id="KW-0808">Transferase</keyword>
<sequence length="255" mass="29803">MSDIGNFVSRIYESKLLEEIKKHPVPGHLGIITDGNRRYARSIGISENEGHVKGKEKLEEVLNWSMEVGIHMVTVYAFSTENFKRKSDEVNFLFNLINDAFIDLLNDERVYKNGIRVKVIGDISKLPDYLKETIKRVEGETNKFKNFRFNLAIGYGGRQEIIDAIKKIGQDILNGKIKVDNINEEMFRSYLYDKTLPDPDLILRTSGEERISNFLLWQSAYSELYFADVNWPELRKIDFLRAIYSYQNRKRRFGE</sequence>
<reference key="1">
    <citation type="journal article" date="2004" name="Proc. Natl. Acad. Sci. U.S.A.">
        <title>Genome sequence of Picrophilus torridus and its implications for life around pH 0.</title>
        <authorList>
            <person name="Fuetterer O."/>
            <person name="Angelov A."/>
            <person name="Liesegang H."/>
            <person name="Gottschalk G."/>
            <person name="Schleper C."/>
            <person name="Schepers B."/>
            <person name="Dock C."/>
            <person name="Antranikian G."/>
            <person name="Liebl W."/>
        </authorList>
    </citation>
    <scope>NUCLEOTIDE SEQUENCE [LARGE SCALE GENOMIC DNA]</scope>
    <source>
        <strain>ATCC 700027 / DSM 9790 / JCM 10055 / NBRC 100828 / KAW 2/3</strain>
    </source>
</reference>
<proteinExistence type="inferred from homology"/>
<protein>
    <recommendedName>
        <fullName evidence="1">Tritrans,polycis-undecaprenyl-diphosphate synthase (geranylgeranyl-diphosphate specific)</fullName>
        <ecNumber evidence="1">2.5.1.89</ecNumber>
    </recommendedName>
    <alternativeName>
        <fullName evidence="1">Undecaprenyl diphosphate synthase</fullName>
        <shortName evidence="1">UDS</shortName>
    </alternativeName>
    <alternativeName>
        <fullName evidence="1">Undecaprenyl pyrophosphate synthase</fullName>
        <shortName evidence="1">UPP synthase</shortName>
    </alternativeName>
</protein>
<comment type="function">
    <text evidence="1">Catalyzes the sequential condensation of isopentenyl diphosphate (IPP) with geranylgeranyl diphosphate (GGPP) to yield (2Z,6Z,10Z,14Z,18Z,22Z,26Z,30E,34E,38E)-undecaprenyl diphosphate (tritrans,heptacis-UPP). It is probably the precursor of glycosyl carrier lipids.</text>
</comment>
<comment type="catalytic activity">
    <reaction evidence="1">
        <text>geranylgeranyl diphosphate + 7 isopentenyl diphosphate = tri-trans,hepta-cis-undecaprenyl diphosphate + 7 diphosphate</text>
        <dbReference type="Rhea" id="RHEA:27622"/>
        <dbReference type="ChEBI" id="CHEBI:33019"/>
        <dbReference type="ChEBI" id="CHEBI:57533"/>
        <dbReference type="ChEBI" id="CHEBI:60388"/>
        <dbReference type="ChEBI" id="CHEBI:128769"/>
        <dbReference type="EC" id="2.5.1.89"/>
    </reaction>
</comment>
<comment type="cofactor">
    <cofactor evidence="1">
        <name>Mg(2+)</name>
        <dbReference type="ChEBI" id="CHEBI:18420"/>
    </cofactor>
    <text evidence="1">Binds 2 magnesium ions per subunit.</text>
</comment>
<comment type="subunit">
    <text evidence="1">Homodimer.</text>
</comment>
<comment type="similarity">
    <text evidence="1">Belongs to the UPP synthase family.</text>
</comment>